<keyword id="KW-0029">Amino-acid transport</keyword>
<keyword id="KW-0050">Antiport</keyword>
<keyword id="KW-1003">Cell membrane</keyword>
<keyword id="KW-0472">Membrane</keyword>
<keyword id="KW-0614">Plasmid</keyword>
<keyword id="KW-1185">Reference proteome</keyword>
<keyword id="KW-0812">Transmembrane</keyword>
<keyword id="KW-1133">Transmembrane helix</keyword>
<keyword id="KW-0813">Transport</keyword>
<evidence type="ECO:0000250" key="1">
    <source>
        <dbReference type="UniProtKB" id="B0R9X2"/>
    </source>
</evidence>
<evidence type="ECO:0000255" key="2"/>
<evidence type="ECO:0000305" key="3"/>
<organism>
    <name type="scientific">Halobacterium salinarum (strain ATCC 700922 / JCM 11081 / NRC-1)</name>
    <name type="common">Halobacterium halobium</name>
    <dbReference type="NCBI Taxonomy" id="64091"/>
    <lineage>
        <taxon>Archaea</taxon>
        <taxon>Methanobacteriati</taxon>
        <taxon>Methanobacteriota</taxon>
        <taxon>Stenosarchaea group</taxon>
        <taxon>Halobacteria</taxon>
        <taxon>Halobacteriales</taxon>
        <taxon>Halobacteriaceae</taxon>
        <taxon>Halobacterium</taxon>
        <taxon>Halobacterium salinarum NRC-34001</taxon>
    </lineage>
</organism>
<proteinExistence type="inferred from homology"/>
<sequence>MVEFEPRSYEDFDPEKRPSFGQALLPIAGMITFLAVGIVLLGLDAQMPLLWGIAFTGVIARYGWGYTWDELFDGISNSIVMGLGAIFILFIIYMLIASWVDAGTIPFIMYWGLEFLTPAVFVPLAALLSFVVATAIGSSWTTAGSLGIALVGIGSGLGIPAPLTAGAILSGVYMGDKQSPLSDTTLLASGVSDVDLWDHVRGMFPNTIIVGVISLALYAVLGLMAETGGTGGTGAEVAQIQGGLAGTYTLSVLVLLPLVITFGLAIKGYPALPSLGAGVFSAAGVSILIQGRGFAEAWQIIYSGTGPKTGVDLVNNLLSTGGLEGSIWVITIVFGALSIGGILEATGVLSVIAHNTAKAVDSVGGATLVTALGPLVINALTADQYMSIVIPGMTFRDLNDEYDLDGTSLSRTLEETGTVSEPMIPWNSGGVFMASALGVPVLSYLPYYFVGILSPILVVIMGFTGWKMYMKDPEESPEESADTAA</sequence>
<accession>Q9HHN1</accession>
<reference key="1">
    <citation type="journal article" date="2000" name="Proc. Natl. Acad. Sci. U.S.A.">
        <title>Genome sequence of Halobacterium species NRC-1.</title>
        <authorList>
            <person name="Ng W.V."/>
            <person name="Kennedy S.P."/>
            <person name="Mahairas G.G."/>
            <person name="Berquist B."/>
            <person name="Pan M."/>
            <person name="Shukla H.D."/>
            <person name="Lasky S.R."/>
            <person name="Baliga N.S."/>
            <person name="Thorsson V."/>
            <person name="Sbrogna J."/>
            <person name="Swartzell S."/>
            <person name="Weir D."/>
            <person name="Hall J."/>
            <person name="Dahl T.A."/>
            <person name="Welti R."/>
            <person name="Goo Y.A."/>
            <person name="Leithauser B."/>
            <person name="Keller K."/>
            <person name="Cruz R."/>
            <person name="Danson M.J."/>
            <person name="Hough D.W."/>
            <person name="Maddocks D.G."/>
            <person name="Jablonski P.E."/>
            <person name="Krebs M.P."/>
            <person name="Angevine C.M."/>
            <person name="Dale H."/>
            <person name="Isenbarger T.A."/>
            <person name="Peck R.F."/>
            <person name="Pohlschroder M."/>
            <person name="Spudich J.L."/>
            <person name="Jung K.-H."/>
            <person name="Alam M."/>
            <person name="Freitas T."/>
            <person name="Hou S."/>
            <person name="Daniels C.J."/>
            <person name="Dennis P.P."/>
            <person name="Omer A.D."/>
            <person name="Ebhardt H."/>
            <person name="Lowe T.M."/>
            <person name="Liang P."/>
            <person name="Riley M."/>
            <person name="Hood L."/>
            <person name="DasSarma S."/>
        </authorList>
    </citation>
    <scope>NUCLEOTIDE SEQUENCE [LARGE SCALE GENOMIC DNA]</scope>
    <source>
        <strain>ATCC 700922 / JCM 11081 / NRC-1</strain>
    </source>
</reference>
<geneLocation type="plasmid">
    <name>pNRC200</name>
</geneLocation>
<feature type="chain" id="PRO_0000411688" description="Arginine/ornithine antiporter ArcD">
    <location>
        <begin position="1"/>
        <end position="485"/>
    </location>
</feature>
<feature type="transmembrane region" description="Helical" evidence="2">
    <location>
        <begin position="23"/>
        <end position="43"/>
    </location>
</feature>
<feature type="transmembrane region" description="Helical" evidence="2">
    <location>
        <begin position="48"/>
        <end position="68"/>
    </location>
</feature>
<feature type="transmembrane region" description="Helical" evidence="2">
    <location>
        <begin position="79"/>
        <end position="99"/>
    </location>
</feature>
<feature type="transmembrane region" description="Helical" evidence="2">
    <location>
        <begin position="116"/>
        <end position="136"/>
    </location>
</feature>
<feature type="transmembrane region" description="Helical" evidence="2">
    <location>
        <begin position="148"/>
        <end position="168"/>
    </location>
</feature>
<feature type="transmembrane region" description="Helical" evidence="2">
    <location>
        <begin position="203"/>
        <end position="223"/>
    </location>
</feature>
<feature type="transmembrane region" description="Helical" evidence="2">
    <location>
        <begin position="246"/>
        <end position="266"/>
    </location>
</feature>
<feature type="transmembrane region" description="Helical" evidence="2">
    <location>
        <begin position="269"/>
        <end position="289"/>
    </location>
</feature>
<feature type="transmembrane region" description="Helical" evidence="2">
    <location>
        <begin position="323"/>
        <end position="343"/>
    </location>
</feature>
<feature type="transmembrane region" description="Helical" evidence="2">
    <location>
        <begin position="362"/>
        <end position="382"/>
    </location>
</feature>
<feature type="transmembrane region" description="Helical" evidence="2">
    <location>
        <begin position="441"/>
        <end position="461"/>
    </location>
</feature>
<dbReference type="EMBL" id="AE004438">
    <property type="protein sequence ID" value="AAG20945.1"/>
    <property type="molecule type" value="Genomic_DNA"/>
</dbReference>
<dbReference type="RefSeq" id="WP_010904158.1">
    <property type="nucleotide sequence ID" value="NZ_BK010831.1"/>
</dbReference>
<dbReference type="GeneID" id="68695249"/>
<dbReference type="KEGG" id="hal:VNG_6313G"/>
<dbReference type="PATRIC" id="fig|64091.14.peg.2291"/>
<dbReference type="HOGENOM" id="CLU_033405_1_0_2"/>
<dbReference type="InParanoid" id="Q9HHN1"/>
<dbReference type="OrthoDB" id="213699at2157"/>
<dbReference type="PhylomeDB" id="Q9HHN1"/>
<dbReference type="Proteomes" id="UP000000554">
    <property type="component" value="Plasmid pNRC200"/>
</dbReference>
<dbReference type="GO" id="GO:0005886">
    <property type="term" value="C:plasma membrane"/>
    <property type="evidence" value="ECO:0007669"/>
    <property type="project" value="UniProtKB-SubCell"/>
</dbReference>
<dbReference type="GO" id="GO:0015385">
    <property type="term" value="F:sodium:proton antiporter activity"/>
    <property type="evidence" value="ECO:0000318"/>
    <property type="project" value="GO_Central"/>
</dbReference>
<dbReference type="GO" id="GO:0006865">
    <property type="term" value="P:amino acid transport"/>
    <property type="evidence" value="ECO:0007669"/>
    <property type="project" value="UniProtKB-KW"/>
</dbReference>
<dbReference type="InterPro" id="IPR018461">
    <property type="entry name" value="Na/H_Antiport_NhaC-like_C"/>
</dbReference>
<dbReference type="InterPro" id="IPR052180">
    <property type="entry name" value="NhaC_Na-H+_Antiporter"/>
</dbReference>
<dbReference type="PANTHER" id="PTHR33451">
    <property type="entry name" value="MALATE-2H(+)/NA(+)-LACTATE ANTIPORTER"/>
    <property type="match status" value="1"/>
</dbReference>
<dbReference type="PANTHER" id="PTHR33451:SF3">
    <property type="entry name" value="MALATE-2H(+)_NA(+)-LACTATE ANTIPORTER"/>
    <property type="match status" value="1"/>
</dbReference>
<dbReference type="Pfam" id="PF03553">
    <property type="entry name" value="Na_H_antiporter"/>
    <property type="match status" value="1"/>
</dbReference>
<gene>
    <name type="primary">arcD</name>
    <name type="ordered locus">VNG_6313G</name>
</gene>
<name>ARCD_HALSA</name>
<protein>
    <recommendedName>
        <fullName evidence="1">Arginine/ornithine antiporter ArcD</fullName>
    </recommendedName>
</protein>
<comment type="function">
    <text evidence="1">Uptake of arginine from the medium in exchange for ornithine.</text>
</comment>
<comment type="catalytic activity">
    <reaction evidence="1">
        <text>L-ornithine(in) + L-arginine(out) = L-ornithine(out) + L-arginine(in)</text>
        <dbReference type="Rhea" id="RHEA:34991"/>
        <dbReference type="ChEBI" id="CHEBI:32682"/>
        <dbReference type="ChEBI" id="CHEBI:46911"/>
    </reaction>
    <physiologicalReaction direction="left-to-right" evidence="1">
        <dbReference type="Rhea" id="RHEA:34992"/>
    </physiologicalReaction>
</comment>
<comment type="subcellular location">
    <subcellularLocation>
        <location evidence="1">Cell membrane</location>
        <topology evidence="2">Multi-pass membrane protein</topology>
    </subcellularLocation>
</comment>
<comment type="similarity">
    <text evidence="3">Belongs to the NhaC Na(+)/H(+) (TC 2.A.35) antiporter family.</text>
</comment>